<sequence length="360" mass="40351">MDFSTNGSEESELYHAQIHLYKHVYNFVSSMALKSAMELGIADAIHNHGKPMTLPELSSSLKLHPSKVNILYRFLRLLTHNGFFAKTTVKSNEGEEETAYVLTPSSKLLVSGKSTCLSSLVKGALHPSSLDMWGVSKKWFHEDKEQTLFECATGENYWDFLNKDSDSLSMFQDAMAADSRLFKLAIQENKHVFEGLESLVDVAGGTGGVAKLIHEAFPHIKCTVFDQPQVVGNLTGNENLNFVGGDMFKSVPSADAVLLKWVLHDWNDELSLKILKNSKEAISHKGKDGKVIIIDISIDENSDDRGLTELQLEYDVVMLTMFLGKERTKKEWEKLIYDAGFSRYKITPICGFKSLIEVYP</sequence>
<protein>
    <recommendedName>
        <fullName>(+)-6a-hydroxymaackiain 3-O-methyltransferase 1</fullName>
        <ecNumber evidence="3 4">2.1.1.270</ecNumber>
    </recommendedName>
    <alternativeName>
        <fullName>Isoflavone 4'-O-methyltransferase</fullName>
        <ecNumber evidence="3 4">2.1.1.46</ecNumber>
    </alternativeName>
</protein>
<name>M3OM1_PEA</name>
<comment type="function">
    <text evidence="2 3 4 5">Methyltransferase involved in the phytoalexin pisatin biosynthesis. Has both 3- and 4'-O-methyltransferase activities. Can use (+)-6a-hydroxymaackiain, 2,7,4'-trihydroxyisoflavanone and with much less activity (+)-medicarpin as substrates, but not (-)-6a-hydroxymaackiain, daidzein, formononetin or isoliquiritigenin. May be involved in formononetin biosynthesis.</text>
</comment>
<comment type="catalytic activity">
    <reaction evidence="3 4">
        <text>(+)-6a-hydroxymaackiain + S-adenosyl-L-methionine = (+)-pisatin + S-adenosyl-L-homocysteine + H(+)</text>
        <dbReference type="Rhea" id="RHEA:35471"/>
        <dbReference type="ChEBI" id="CHEBI:15378"/>
        <dbReference type="ChEBI" id="CHEBI:43129"/>
        <dbReference type="ChEBI" id="CHEBI:57856"/>
        <dbReference type="ChEBI" id="CHEBI:59789"/>
        <dbReference type="ChEBI" id="CHEBI:67347"/>
        <dbReference type="EC" id="2.1.1.270"/>
    </reaction>
</comment>
<comment type="catalytic activity">
    <reaction evidence="3 4">
        <text>a 4'-hydroxyisoflavone + S-adenosyl-L-methionine = a 4'-methoxyisoflavone + S-adenosyl-L-homocysteine + H(+)</text>
        <dbReference type="Rhea" id="RHEA:31739"/>
        <dbReference type="ChEBI" id="CHEBI:15378"/>
        <dbReference type="ChEBI" id="CHEBI:57856"/>
        <dbReference type="ChEBI" id="CHEBI:59789"/>
        <dbReference type="ChEBI" id="CHEBI:63328"/>
        <dbReference type="ChEBI" id="CHEBI:133959"/>
        <dbReference type="EC" id="2.1.1.46"/>
    </reaction>
</comment>
<comment type="biophysicochemical properties">
    <kinetics>
        <KM evidence="2">3 uM for 2,7,4'-trihydroxyisoflavanone</KM>
        <KM evidence="2">6 uM for (+)-6a-hydroxymaackiain</KM>
        <Vmax evidence="2">1800.0 pmol/sec/mg enzyme with 2,7,4'-trihydroxyisoflavanone as substrate</Vmax>
        <Vmax evidence="2">910.0 pmol/sec/mg enzyme with (+)-6a-hydroxymaackiain as substrate</Vmax>
    </kinetics>
</comment>
<comment type="induction">
    <text evidence="4 5">Up-regulated by copper.</text>
</comment>
<comment type="similarity">
    <text evidence="1">Belongs to the class I-like SAM-binding methyltransferase superfamily. Cation-independent O-methyltransferase family. COMT subfamily.</text>
</comment>
<accession>O24305</accession>
<dbReference type="EC" id="2.1.1.270" evidence="3 4"/>
<dbReference type="EC" id="2.1.1.46" evidence="3 4"/>
<dbReference type="EMBL" id="U69554">
    <property type="protein sequence ID" value="AAC49856.1"/>
    <property type="molecule type" value="mRNA"/>
</dbReference>
<dbReference type="PIR" id="T06786">
    <property type="entry name" value="T06786"/>
</dbReference>
<dbReference type="SMR" id="O24305"/>
<dbReference type="KEGG" id="ag:AAC49856"/>
<dbReference type="BRENDA" id="2.1.1.270">
    <property type="organism ID" value="4872"/>
</dbReference>
<dbReference type="SABIO-RK" id="O24305"/>
<dbReference type="GO" id="GO:0102671">
    <property type="term" value="F:6a-hydroxymaackiain-3-O-methyltransferase activity"/>
    <property type="evidence" value="ECO:0007669"/>
    <property type="project" value="UniProtKB-EC"/>
</dbReference>
<dbReference type="GO" id="GO:0030746">
    <property type="term" value="F:isoflavone 4'-O-methyltransferase activity"/>
    <property type="evidence" value="ECO:0007669"/>
    <property type="project" value="UniProtKB-EC"/>
</dbReference>
<dbReference type="GO" id="GO:0008171">
    <property type="term" value="F:O-methyltransferase activity"/>
    <property type="evidence" value="ECO:0007669"/>
    <property type="project" value="InterPro"/>
</dbReference>
<dbReference type="GO" id="GO:0046983">
    <property type="term" value="F:protein dimerization activity"/>
    <property type="evidence" value="ECO:0007669"/>
    <property type="project" value="InterPro"/>
</dbReference>
<dbReference type="GO" id="GO:0032259">
    <property type="term" value="P:methylation"/>
    <property type="evidence" value="ECO:0007669"/>
    <property type="project" value="UniProtKB-KW"/>
</dbReference>
<dbReference type="FunFam" id="1.10.10.10:FF:000213">
    <property type="entry name" value="Coniferyl alcohol 9-O-methyltransferase"/>
    <property type="match status" value="1"/>
</dbReference>
<dbReference type="FunFam" id="3.40.50.150:FF:000206">
    <property type="entry name" value="O-methyltransferase ZRP4"/>
    <property type="match status" value="1"/>
</dbReference>
<dbReference type="Gene3D" id="3.40.50.150">
    <property type="entry name" value="Vaccinia Virus protein VP39"/>
    <property type="match status" value="1"/>
</dbReference>
<dbReference type="Gene3D" id="1.10.10.10">
    <property type="entry name" value="Winged helix-like DNA-binding domain superfamily/Winged helix DNA-binding domain"/>
    <property type="match status" value="1"/>
</dbReference>
<dbReference type="InterPro" id="IPR016461">
    <property type="entry name" value="COMT-like"/>
</dbReference>
<dbReference type="InterPro" id="IPR001077">
    <property type="entry name" value="O_MeTrfase_dom"/>
</dbReference>
<dbReference type="InterPro" id="IPR012967">
    <property type="entry name" value="Plant_O-MeTrfase_dimerisation"/>
</dbReference>
<dbReference type="InterPro" id="IPR029063">
    <property type="entry name" value="SAM-dependent_MTases_sf"/>
</dbReference>
<dbReference type="InterPro" id="IPR036388">
    <property type="entry name" value="WH-like_DNA-bd_sf"/>
</dbReference>
<dbReference type="InterPro" id="IPR036390">
    <property type="entry name" value="WH_DNA-bd_sf"/>
</dbReference>
<dbReference type="PANTHER" id="PTHR11746">
    <property type="entry name" value="O-METHYLTRANSFERASE"/>
    <property type="match status" value="1"/>
</dbReference>
<dbReference type="Pfam" id="PF08100">
    <property type="entry name" value="Dimerisation"/>
    <property type="match status" value="1"/>
</dbReference>
<dbReference type="Pfam" id="PF00891">
    <property type="entry name" value="Methyltransf_2"/>
    <property type="match status" value="1"/>
</dbReference>
<dbReference type="PIRSF" id="PIRSF005739">
    <property type="entry name" value="O-mtase"/>
    <property type="match status" value="1"/>
</dbReference>
<dbReference type="SUPFAM" id="SSF53335">
    <property type="entry name" value="S-adenosyl-L-methionine-dependent methyltransferases"/>
    <property type="match status" value="1"/>
</dbReference>
<dbReference type="SUPFAM" id="SSF46785">
    <property type="entry name" value="Winged helix' DNA-binding domain"/>
    <property type="match status" value="1"/>
</dbReference>
<dbReference type="PROSITE" id="PS51683">
    <property type="entry name" value="SAM_OMT_II"/>
    <property type="match status" value="1"/>
</dbReference>
<proteinExistence type="evidence at protein level"/>
<gene>
    <name type="primary">HMM1</name>
    <name type="synonym">HMM6</name>
</gene>
<evidence type="ECO:0000255" key="1">
    <source>
        <dbReference type="PROSITE-ProRule" id="PRU01020"/>
    </source>
</evidence>
<evidence type="ECO:0000269" key="2">
    <source>
    </source>
</evidence>
<evidence type="ECO:0000269" key="3">
    <source>
    </source>
</evidence>
<evidence type="ECO:0000269" key="4">
    <source>
    </source>
</evidence>
<evidence type="ECO:0000269" key="5">
    <source>
    </source>
</evidence>
<organism>
    <name type="scientific">Pisum sativum</name>
    <name type="common">Garden pea</name>
    <name type="synonym">Lathyrus oleraceus</name>
    <dbReference type="NCBI Taxonomy" id="3888"/>
    <lineage>
        <taxon>Eukaryota</taxon>
        <taxon>Viridiplantae</taxon>
        <taxon>Streptophyta</taxon>
        <taxon>Embryophyta</taxon>
        <taxon>Tracheophyta</taxon>
        <taxon>Spermatophyta</taxon>
        <taxon>Magnoliopsida</taxon>
        <taxon>eudicotyledons</taxon>
        <taxon>Gunneridae</taxon>
        <taxon>Pentapetalae</taxon>
        <taxon>rosids</taxon>
        <taxon>fabids</taxon>
        <taxon>Fabales</taxon>
        <taxon>Fabaceae</taxon>
        <taxon>Papilionoideae</taxon>
        <taxon>50 kb inversion clade</taxon>
        <taxon>NPAAA clade</taxon>
        <taxon>Hologalegina</taxon>
        <taxon>IRL clade</taxon>
        <taxon>Fabeae</taxon>
        <taxon>Pisum</taxon>
    </lineage>
</organism>
<keyword id="KW-0489">Methyltransferase</keyword>
<keyword id="KW-0949">S-adenosyl-L-methionine</keyword>
<keyword id="KW-0808">Transferase</keyword>
<reference key="1">
    <citation type="journal article" date="1997" name="Plant Mol. Biol.">
        <title>Isolation of the cDNAs encoding (+)6a-hydroxymaackiain 3-O-methyltransferase, the terminal step for the synthesis of the phytoalexin pisatin in Pisum sativum.</title>
        <authorList>
            <person name="Wu Q."/>
            <person name="Preisig C.L."/>
            <person name="VanEtten H.D."/>
        </authorList>
    </citation>
    <scope>NUCLEOTIDE SEQUENCE [MRNA]</scope>
    <scope>FUNCTION</scope>
    <scope>CATALYTIC ACTIVITY</scope>
    <scope>INDUCTION BY COPPER</scope>
    <source>
        <strain>cv. Alaska</strain>
    </source>
</reference>
<reference key="2">
    <citation type="journal article" date="1991" name="Arch. Biochem. Biophys.">
        <title>Induction of 6a-hydroxymaackiain 3-O-methyltransferase and phenylalanine ammonia-lyase mRNA translational activities during the biosynthesis of pisatin.</title>
        <authorList>
            <person name="Preisig C.L."/>
            <person name="VanEtten H.D."/>
            <person name="Moreau R.A."/>
        </authorList>
    </citation>
    <scope>FUNCTION</scope>
    <scope>INDUCTION BY COPPER</scope>
</reference>
<reference key="3">
    <citation type="journal article" date="2006" name="Phytochemistry">
        <title>Catalytic specificity of pea O-methyltransferases suggests gene duplication for (+)-pisatin biosynthesis.</title>
        <authorList>
            <person name="Akashi T."/>
            <person name="VanEtten H.D."/>
            <person name="Sawada Y."/>
            <person name="Wasmann C.C."/>
            <person name="Uchiyama H."/>
            <person name="Ayabe S."/>
        </authorList>
    </citation>
    <scope>FUNCTION</scope>
    <scope>CATALYTIC ACTIVITY</scope>
    <scope>BIOPHYSICOCHEMICAL PROPERTIES</scope>
    <scope>3D-STRUCTURE MODELING</scope>
</reference>
<reference key="4">
    <citation type="journal article" date="2008" name="Phytochemistry">
        <title>Inactivation of pea genes by RNAi supports the involvement of two similar O-methyltransferases in the biosynthesis of (+)-pisatin and of chiral intermediates with a configuration opposite that found in (+)-pisatin.</title>
        <authorList>
            <person name="Kaimoyo E."/>
            <person name="VanEtten H.D."/>
        </authorList>
    </citation>
    <scope>FUNCTION</scope>
</reference>
<feature type="chain" id="PRO_0000411978" description="(+)-6a-hydroxymaackiain 3-O-methyltransferase 1">
    <location>
        <begin position="1"/>
        <end position="360"/>
    </location>
</feature>
<feature type="active site" description="Proton acceptor" evidence="1">
    <location>
        <position position="264"/>
    </location>
</feature>
<feature type="binding site" evidence="1">
    <location>
        <begin position="202"/>
        <end position="205"/>
    </location>
    <ligand>
        <name>S-adenosyl-L-methionine</name>
        <dbReference type="ChEBI" id="CHEBI:59789"/>
    </ligand>
</feature>
<feature type="binding site" evidence="1">
    <location>
        <begin position="226"/>
        <end position="227"/>
    </location>
    <ligand>
        <name>S-adenosyl-L-methionine</name>
        <dbReference type="ChEBI" id="CHEBI:59789"/>
    </ligand>
</feature>
<feature type="binding site" evidence="1">
    <location>
        <position position="226"/>
    </location>
    <ligand>
        <name>S-adenosyl-L-methionine</name>
        <dbReference type="ChEBI" id="CHEBI:59789"/>
    </ligand>
</feature>
<feature type="binding site" evidence="1">
    <location>
        <begin position="246"/>
        <end position="247"/>
    </location>
    <ligand>
        <name>S-adenosyl-L-methionine</name>
        <dbReference type="ChEBI" id="CHEBI:59789"/>
    </ligand>
</feature>
<feature type="binding site" evidence="1">
    <location>
        <position position="260"/>
    </location>
    <ligand>
        <name>S-adenosyl-L-methionine</name>
        <dbReference type="ChEBI" id="CHEBI:59789"/>
    </ligand>
</feature>